<protein>
    <recommendedName>
        <fullName evidence="1">Translation initiation factor 2 subunit beta</fullName>
    </recommendedName>
    <alternativeName>
        <fullName evidence="1">aIF2-beta</fullName>
    </alternativeName>
    <alternativeName>
        <fullName evidence="1">eIF-2-beta</fullName>
    </alternativeName>
</protein>
<accession>Q6L0E6</accession>
<keyword id="KW-0396">Initiation factor</keyword>
<keyword id="KW-0648">Protein biosynthesis</keyword>
<name>IF2B_PICTO</name>
<gene>
    <name evidence="1" type="primary">eif2b</name>
    <name type="ordered locus">PTO0971</name>
</gene>
<comment type="function">
    <text evidence="1">eIF-2 functions in the early steps of protein synthesis by forming a ternary complex with GTP and initiator tRNA.</text>
</comment>
<comment type="subunit">
    <text evidence="1">Heterotrimer composed of an alpha, a beta and a gamma chain.</text>
</comment>
<comment type="similarity">
    <text evidence="1">Belongs to the eIF-2-beta/eIF-5 family.</text>
</comment>
<proteinExistence type="inferred from homology"/>
<reference key="1">
    <citation type="journal article" date="2004" name="Proc. Natl. Acad. Sci. U.S.A.">
        <title>Genome sequence of Picrophilus torridus and its implications for life around pH 0.</title>
        <authorList>
            <person name="Fuetterer O."/>
            <person name="Angelov A."/>
            <person name="Liesegang H."/>
            <person name="Gottschalk G."/>
            <person name="Schleper C."/>
            <person name="Schepers B."/>
            <person name="Dock C."/>
            <person name="Antranikian G."/>
            <person name="Liebl W."/>
        </authorList>
    </citation>
    <scope>NUCLEOTIDE SEQUENCE [LARGE SCALE GENOMIC DNA]</scope>
    <source>
        <strain>ATCC 700027 / DSM 9790 / JCM 10055 / NBRC 100828 / KAW 2/3</strain>
    </source>
</reference>
<organism>
    <name type="scientific">Picrophilus torridus (strain ATCC 700027 / DSM 9790 / JCM 10055 / NBRC 100828 / KAW 2/3)</name>
    <dbReference type="NCBI Taxonomy" id="1122961"/>
    <lineage>
        <taxon>Archaea</taxon>
        <taxon>Methanobacteriati</taxon>
        <taxon>Thermoplasmatota</taxon>
        <taxon>Thermoplasmata</taxon>
        <taxon>Thermoplasmatales</taxon>
        <taxon>Picrophilaceae</taxon>
        <taxon>Picrophilus</taxon>
    </lineage>
</organism>
<sequence>MNFDYNKLLERASGVLSSKTKNESRLKIPEPDVIYEGKSTIIRNFIDITEMMNRDPEDVIKYLTKEFGIGAVLSGQRLIINRKVSEDEIQSKMNEYMATYVICYECKSPDTEIQKIGRTYLLVCKACGAQHPIRSNREIIENSNGIEIGKEYTVTIESTGSAGEGIARYQGYTIYVPKAKKGERVKIIIRKIKRNVAIAELADKK</sequence>
<evidence type="ECO:0000255" key="1">
    <source>
        <dbReference type="HAMAP-Rule" id="MF_00232"/>
    </source>
</evidence>
<dbReference type="EMBL" id="AE017261">
    <property type="protein sequence ID" value="AAT43556.1"/>
    <property type="molecule type" value="Genomic_DNA"/>
</dbReference>
<dbReference type="RefSeq" id="WP_011177772.1">
    <property type="nucleotide sequence ID" value="NC_005877.1"/>
</dbReference>
<dbReference type="SMR" id="Q6L0E6"/>
<dbReference type="FunCoup" id="Q6L0E6">
    <property type="interactions" value="134"/>
</dbReference>
<dbReference type="STRING" id="263820.PTO0971"/>
<dbReference type="PaxDb" id="263820-PTO0971"/>
<dbReference type="GeneID" id="2845210"/>
<dbReference type="KEGG" id="pto:PTO0971"/>
<dbReference type="eggNOG" id="arCOG01640">
    <property type="taxonomic scope" value="Archaea"/>
</dbReference>
<dbReference type="HOGENOM" id="CLU_026663_3_0_2"/>
<dbReference type="InParanoid" id="Q6L0E6"/>
<dbReference type="OrthoDB" id="38099at2157"/>
<dbReference type="Proteomes" id="UP000000438">
    <property type="component" value="Chromosome"/>
</dbReference>
<dbReference type="GO" id="GO:0003743">
    <property type="term" value="F:translation initiation factor activity"/>
    <property type="evidence" value="ECO:0007669"/>
    <property type="project" value="UniProtKB-UniRule"/>
</dbReference>
<dbReference type="FunFam" id="3.30.30.170:FF:000001">
    <property type="entry name" value="Eukaryotic translation initiation factor 2 subunit"/>
    <property type="match status" value="1"/>
</dbReference>
<dbReference type="Gene3D" id="3.30.30.170">
    <property type="match status" value="1"/>
</dbReference>
<dbReference type="Gene3D" id="2.40.50.140">
    <property type="entry name" value="Nucleic acid-binding proteins"/>
    <property type="match status" value="1"/>
</dbReference>
<dbReference type="HAMAP" id="MF_00232">
    <property type="entry name" value="eIF_2_beta"/>
    <property type="match status" value="1"/>
</dbReference>
<dbReference type="InterPro" id="IPR045196">
    <property type="entry name" value="IF2/IF5"/>
</dbReference>
<dbReference type="InterPro" id="IPR012340">
    <property type="entry name" value="NA-bd_OB-fold"/>
</dbReference>
<dbReference type="InterPro" id="IPR004458">
    <property type="entry name" value="TIF2_bsu_arc"/>
</dbReference>
<dbReference type="InterPro" id="IPR002792">
    <property type="entry name" value="TRAM_dom"/>
</dbReference>
<dbReference type="InterPro" id="IPR002735">
    <property type="entry name" value="Transl_init_fac_IF2/IF5_dom"/>
</dbReference>
<dbReference type="InterPro" id="IPR016189">
    <property type="entry name" value="Transl_init_fac_IF2/IF5_N"/>
</dbReference>
<dbReference type="InterPro" id="IPR016190">
    <property type="entry name" value="Transl_init_fac_IF2/IF5_Zn-bd"/>
</dbReference>
<dbReference type="NCBIfam" id="NF003067">
    <property type="entry name" value="PRK03988.1"/>
    <property type="match status" value="1"/>
</dbReference>
<dbReference type="NCBIfam" id="NF008993">
    <property type="entry name" value="PRK12336.1"/>
    <property type="match status" value="1"/>
</dbReference>
<dbReference type="PANTHER" id="PTHR23001">
    <property type="entry name" value="EUKARYOTIC TRANSLATION INITIATION FACTOR"/>
    <property type="match status" value="1"/>
</dbReference>
<dbReference type="PANTHER" id="PTHR23001:SF3">
    <property type="entry name" value="EUKARYOTIC TRANSLATION INITIATION FACTOR 2 SUBUNIT 2"/>
    <property type="match status" value="1"/>
</dbReference>
<dbReference type="Pfam" id="PF01873">
    <property type="entry name" value="eIF-5_eIF-2B"/>
    <property type="match status" value="1"/>
</dbReference>
<dbReference type="Pfam" id="PF01938">
    <property type="entry name" value="TRAM"/>
    <property type="match status" value="1"/>
</dbReference>
<dbReference type="SMART" id="SM00653">
    <property type="entry name" value="eIF2B_5"/>
    <property type="match status" value="1"/>
</dbReference>
<dbReference type="SUPFAM" id="SSF50249">
    <property type="entry name" value="Nucleic acid-binding proteins"/>
    <property type="match status" value="1"/>
</dbReference>
<dbReference type="SUPFAM" id="SSF100966">
    <property type="entry name" value="Translation initiation factor 2 beta, aIF2beta, N-terminal domain"/>
    <property type="match status" value="1"/>
</dbReference>
<dbReference type="SUPFAM" id="SSF75689">
    <property type="entry name" value="Zinc-binding domain of translation initiation factor 2 beta"/>
    <property type="match status" value="1"/>
</dbReference>
<dbReference type="PROSITE" id="PS50926">
    <property type="entry name" value="TRAM"/>
    <property type="match status" value="1"/>
</dbReference>
<feature type="chain" id="PRO_0000137427" description="Translation initiation factor 2 subunit beta">
    <location>
        <begin position="1"/>
        <end position="205"/>
    </location>
</feature>
<feature type="domain" description="TRAM" evidence="1">
    <location>
        <begin position="145"/>
        <end position="203"/>
    </location>
</feature>